<feature type="chain" id="PRO_0000160189" description="Putative deaminase AgaI">
    <location>
        <begin position="1"/>
        <end position="251"/>
    </location>
</feature>
<feature type="active site" description="Proton acceptor; for enolization step" evidence="1">
    <location>
        <position position="86"/>
    </location>
</feature>
<feature type="active site" description="For ring-opening step" evidence="1">
    <location>
        <position position="154"/>
    </location>
</feature>
<feature type="active site" description="Proton acceptor; for ring-opening step" evidence="1">
    <location>
        <position position="156"/>
    </location>
</feature>
<feature type="active site" description="For ring-opening step" evidence="1">
    <location>
        <position position="161"/>
    </location>
</feature>
<accession>P42912</accession>
<accession>Q2M969</accession>
<reference key="1">
    <citation type="journal article" date="2000" name="Mol. Microbiol.">
        <title>Pathways for the utilization of N-acetyl-galactosamine and galactosamine in Escherichia coli.</title>
        <authorList>
            <person name="Brinkkoetter A."/>
            <person name="Kloess H."/>
            <person name="Alpert C.-A."/>
            <person name="Lengeler J.W."/>
        </authorList>
    </citation>
    <scope>NUCLEOTIDE SEQUENCE [GENOMIC DNA]</scope>
    <source>
        <strain>C</strain>
    </source>
</reference>
<reference key="2">
    <citation type="journal article" date="1997" name="Science">
        <title>The complete genome sequence of Escherichia coli K-12.</title>
        <authorList>
            <person name="Blattner F.R."/>
            <person name="Plunkett G. III"/>
            <person name="Bloch C.A."/>
            <person name="Perna N.T."/>
            <person name="Burland V."/>
            <person name="Riley M."/>
            <person name="Collado-Vides J."/>
            <person name="Glasner J.D."/>
            <person name="Rode C.K."/>
            <person name="Mayhew G.F."/>
            <person name="Gregor J."/>
            <person name="Davis N.W."/>
            <person name="Kirkpatrick H.A."/>
            <person name="Goeden M.A."/>
            <person name="Rose D.J."/>
            <person name="Mau B."/>
            <person name="Shao Y."/>
        </authorList>
    </citation>
    <scope>NUCLEOTIDE SEQUENCE [LARGE SCALE GENOMIC DNA]</scope>
    <source>
        <strain>K12 / MG1655 / ATCC 47076</strain>
    </source>
</reference>
<reference key="3">
    <citation type="journal article" date="2006" name="Mol. Syst. Biol.">
        <title>Highly accurate genome sequences of Escherichia coli K-12 strains MG1655 and W3110.</title>
        <authorList>
            <person name="Hayashi K."/>
            <person name="Morooka N."/>
            <person name="Yamamoto Y."/>
            <person name="Fujita K."/>
            <person name="Isono K."/>
            <person name="Choi S."/>
            <person name="Ohtsubo E."/>
            <person name="Baba T."/>
            <person name="Wanner B.L."/>
            <person name="Mori H."/>
            <person name="Horiuchi T."/>
        </authorList>
    </citation>
    <scope>NUCLEOTIDE SEQUENCE [LARGE SCALE GENOMIC DNA]</scope>
    <source>
        <strain>K12 / W3110 / ATCC 27325 / DSM 5911</strain>
    </source>
</reference>
<reference key="4">
    <citation type="journal article" date="1996" name="Microbiology">
        <title>Novel phosphotransferase genes revealed by bacterial genome sequencing: a gene cluster encoding a putative N-acetylgalactosamine metabolic pathway in Escherichia coli.</title>
        <authorList>
            <person name="Reizer J."/>
            <person name="Ramseier T.M."/>
            <person name="Reizer A."/>
            <person name="Charbit A."/>
            <person name="Saier M.H. Jr."/>
        </authorList>
    </citation>
    <scope>DISCUSSION OF SEQUENCE</scope>
</reference>
<reference key="5">
    <citation type="journal article" date="2013" name="BMC Microbiol.">
        <title>Genetic analysis of the roles of agaA, agaI, and agaS genes in the N-acetyl-D-galactosamine and D-galactosamine catabolic pathways in Escherichia coli strains O157:H7 and C.</title>
        <authorList>
            <person name="Hu Z."/>
            <person name="Patel I.R."/>
            <person name="Mukherjee A."/>
        </authorList>
    </citation>
    <scope>DISRUPTION PHENOTYPE</scope>
    <source>
        <strain>C</strain>
    </source>
</reference>
<proteinExistence type="inferred from homology"/>
<name>AGAI_ECOLI</name>
<dbReference type="EC" id="3.5.99.-" evidence="3"/>
<dbReference type="EMBL" id="AF228498">
    <property type="protein sequence ID" value="AAF81093.1"/>
    <property type="molecule type" value="Genomic_DNA"/>
</dbReference>
<dbReference type="EMBL" id="U18997">
    <property type="protein sequence ID" value="AAA57944.1"/>
    <property type="molecule type" value="Genomic_DNA"/>
</dbReference>
<dbReference type="EMBL" id="U00096">
    <property type="protein sequence ID" value="AAC76175.1"/>
    <property type="molecule type" value="Genomic_DNA"/>
</dbReference>
<dbReference type="EMBL" id="AP009048">
    <property type="protein sequence ID" value="BAE77187.1"/>
    <property type="molecule type" value="Genomic_DNA"/>
</dbReference>
<dbReference type="PIR" id="A65104">
    <property type="entry name" value="A65104"/>
</dbReference>
<dbReference type="RefSeq" id="NP_417610.1">
    <property type="nucleotide sequence ID" value="NC_000913.3"/>
</dbReference>
<dbReference type="RefSeq" id="WP_001311150.1">
    <property type="nucleotide sequence ID" value="NZ_LN832404.1"/>
</dbReference>
<dbReference type="SMR" id="P42912"/>
<dbReference type="BioGRID" id="4261594">
    <property type="interactions" value="9"/>
</dbReference>
<dbReference type="DIP" id="DIP-9069N"/>
<dbReference type="FunCoup" id="P42912">
    <property type="interactions" value="130"/>
</dbReference>
<dbReference type="IntAct" id="P42912">
    <property type="interactions" value="4"/>
</dbReference>
<dbReference type="STRING" id="511145.b3141"/>
<dbReference type="PaxDb" id="511145-b3141"/>
<dbReference type="EnsemblBacteria" id="AAC76175">
    <property type="protein sequence ID" value="AAC76175"/>
    <property type="gene ID" value="b3141"/>
</dbReference>
<dbReference type="GeneID" id="947985"/>
<dbReference type="KEGG" id="ecj:JW3110"/>
<dbReference type="KEGG" id="eco:b3141"/>
<dbReference type="PATRIC" id="fig|511145.12.peg.3236"/>
<dbReference type="EchoBASE" id="EB2625"/>
<dbReference type="eggNOG" id="COG0363">
    <property type="taxonomic scope" value="Bacteria"/>
</dbReference>
<dbReference type="HOGENOM" id="CLU_049611_1_1_6"/>
<dbReference type="InParanoid" id="P42912"/>
<dbReference type="OMA" id="ILQPACH"/>
<dbReference type="OrthoDB" id="9810967at2"/>
<dbReference type="PhylomeDB" id="P42912"/>
<dbReference type="BioCyc" id="EcoCyc:G7636-MONOMER"/>
<dbReference type="PRO" id="PR:P42912"/>
<dbReference type="Proteomes" id="UP000000625">
    <property type="component" value="Chromosome"/>
</dbReference>
<dbReference type="GO" id="GO:0005737">
    <property type="term" value="C:cytoplasm"/>
    <property type="evidence" value="ECO:0000318"/>
    <property type="project" value="GO_Central"/>
</dbReference>
<dbReference type="GO" id="GO:0005829">
    <property type="term" value="C:cytosol"/>
    <property type="evidence" value="ECO:0000318"/>
    <property type="project" value="GO_Central"/>
</dbReference>
<dbReference type="GO" id="GO:0043877">
    <property type="term" value="F:galactosamine-6-phosphate isomerase activity"/>
    <property type="evidence" value="ECO:0000303"/>
    <property type="project" value="EcoliWiki"/>
</dbReference>
<dbReference type="GO" id="GO:0004342">
    <property type="term" value="F:glucosamine-6-phosphate deaminase activity"/>
    <property type="evidence" value="ECO:0000318"/>
    <property type="project" value="GO_Central"/>
</dbReference>
<dbReference type="GO" id="GO:0042802">
    <property type="term" value="F:identical protein binding"/>
    <property type="evidence" value="ECO:0000318"/>
    <property type="project" value="GO_Central"/>
</dbReference>
<dbReference type="GO" id="GO:0005975">
    <property type="term" value="P:carbohydrate metabolic process"/>
    <property type="evidence" value="ECO:0007669"/>
    <property type="project" value="InterPro"/>
</dbReference>
<dbReference type="GO" id="GO:0006043">
    <property type="term" value="P:glucosamine catabolic process"/>
    <property type="evidence" value="ECO:0000318"/>
    <property type="project" value="GO_Central"/>
</dbReference>
<dbReference type="GO" id="GO:0006046">
    <property type="term" value="P:N-acetylglucosamine catabolic process"/>
    <property type="evidence" value="ECO:0000318"/>
    <property type="project" value="GO_Central"/>
</dbReference>
<dbReference type="GO" id="GO:0019262">
    <property type="term" value="P:N-acetylneuraminate catabolic process"/>
    <property type="evidence" value="ECO:0000318"/>
    <property type="project" value="GO_Central"/>
</dbReference>
<dbReference type="CDD" id="cd01399">
    <property type="entry name" value="GlcN6P_deaminase"/>
    <property type="match status" value="1"/>
</dbReference>
<dbReference type="Gene3D" id="3.40.50.1360">
    <property type="match status" value="1"/>
</dbReference>
<dbReference type="InterPro" id="IPR006148">
    <property type="entry name" value="Glc/Gal-6P_isomerase"/>
</dbReference>
<dbReference type="InterPro" id="IPR004547">
    <property type="entry name" value="Glucosamine6P_isomerase"/>
</dbReference>
<dbReference type="InterPro" id="IPR018321">
    <property type="entry name" value="Glucosamine6P_isomerase_CS"/>
</dbReference>
<dbReference type="InterPro" id="IPR037171">
    <property type="entry name" value="NagB/RpiA_transferase-like"/>
</dbReference>
<dbReference type="NCBIfam" id="NF007291">
    <property type="entry name" value="PRK09762.1"/>
    <property type="match status" value="1"/>
</dbReference>
<dbReference type="PANTHER" id="PTHR11280">
    <property type="entry name" value="GLUCOSAMINE-6-PHOSPHATE ISOMERASE"/>
    <property type="match status" value="1"/>
</dbReference>
<dbReference type="PANTHER" id="PTHR11280:SF5">
    <property type="entry name" value="GLUCOSAMINE-6-PHOSPHATE ISOMERASE"/>
    <property type="match status" value="1"/>
</dbReference>
<dbReference type="Pfam" id="PF01182">
    <property type="entry name" value="Glucosamine_iso"/>
    <property type="match status" value="1"/>
</dbReference>
<dbReference type="SUPFAM" id="SSF100950">
    <property type="entry name" value="NagB/RpiA/CoA transferase-like"/>
    <property type="match status" value="1"/>
</dbReference>
<dbReference type="PROSITE" id="PS01161">
    <property type="entry name" value="GLC_GALNAC_ISOMERASE"/>
    <property type="match status" value="1"/>
</dbReference>
<sequence length="251" mass="27724">MERGTASGGASLLKEFHPVQTLQQVENYTALSERASEYLLAVIRSKPNAVICLATGATPLLTYHYLVEKIHQQQVDVSQLTFVKLDEWVDLPLTMPGTCETFLQQHIVQPLGLREDQLISFRSEEINETECERVTNLIARKGGLDLCVLGLGKNGHLGLNEPGESLQPACHISQLDARTQQHEMLKTAGRPVTRGITLGLKDILNAREVLLLVTGEGKQDATDRFLTAKVSTAIPASFLWLHSNFICLINT</sequence>
<gene>
    <name type="primary">agaI</name>
    <name type="synonym">yraG</name>
    <name type="ordered locus">b3141</name>
    <name type="ordered locus">JW3110</name>
</gene>
<keyword id="KW-0378">Hydrolase</keyword>
<keyword id="KW-1185">Reference proteome</keyword>
<comment type="disruption phenotype">
    <text evidence="2">Deletion of the gene does not affect growth on N-acetyl-D-galactosamine, D-galactosamine or N-acetyl-D-glucosamine.</text>
</comment>
<comment type="miscellaneous">
    <text>In contrast to E.coli strains C and EC3132, K-12 strains cannot grow on N-acetylgalactosamine and D-galactosamine, because they carry a deletion and thus lack active PTS systems specific for these compounds. Therefore, AgaI in K-12 strains is not involved in the degradation of these compounds.</text>
</comment>
<comment type="similarity">
    <text evidence="3">Belongs to the glucosamine/galactosamine-6-phosphate isomerase family.</text>
</comment>
<comment type="caution">
    <text evidence="4">Was originally thought to be involved in the deamination and isomerization of D-galactosamine 6-phosphate to D-tagatofuranose 6-phosphate.</text>
</comment>
<evidence type="ECO:0000250" key="1"/>
<evidence type="ECO:0000269" key="2">
    <source>
    </source>
</evidence>
<evidence type="ECO:0000305" key="3"/>
<evidence type="ECO:0000305" key="4">
    <source>
    </source>
</evidence>
<organism>
    <name type="scientific">Escherichia coli (strain K12)</name>
    <dbReference type="NCBI Taxonomy" id="83333"/>
    <lineage>
        <taxon>Bacteria</taxon>
        <taxon>Pseudomonadati</taxon>
        <taxon>Pseudomonadota</taxon>
        <taxon>Gammaproteobacteria</taxon>
        <taxon>Enterobacterales</taxon>
        <taxon>Enterobacteriaceae</taxon>
        <taxon>Escherichia</taxon>
    </lineage>
</organism>
<protein>
    <recommendedName>
        <fullName evidence="3">Putative deaminase AgaI</fullName>
        <ecNumber evidence="3">3.5.99.-</ecNumber>
    </recommendedName>
</protein>